<keyword id="KW-0002">3D-structure</keyword>
<keyword id="KW-0227">DNA damage</keyword>
<keyword id="KW-0234">DNA repair</keyword>
<keyword id="KW-0539">Nucleus</keyword>
<keyword id="KW-1185">Reference proteome</keyword>
<keyword id="KW-0677">Repeat</keyword>
<keyword id="KW-0804">Transcription</keyword>
<comment type="function">
    <text evidence="4 5 6 7 8">Key component of the cytosolic iron-sulfur protein assembly (CIA) machinery that mediates the incorporation of iron-sulfur cluster into apoproteins specifically involved in DNA metabolism and genomic integrity. Acts as an adapter between early-acting CIA components and a subset of cellular target iron-sulfur proteins such as RAD3/XPD and DNA2, thereby playing a key role in nucleotide excision repair (NER) and RNA polymerase II (POL II) transcription.</text>
</comment>
<comment type="interaction">
    <interactant intactId="EBI-11492">
        <id>P40469</id>
    </interactant>
    <interactant intactId="EBI-32145">
        <id>Q05583</id>
        <label>CIA1</label>
    </interactant>
    <organismsDiffer>false</organismsDiffer>
    <experiments>6</experiments>
</comment>
<comment type="interaction">
    <interactant intactId="EBI-11492">
        <id>P40469</id>
    </interactant>
    <interactant intactId="EBI-24704">
        <id>P38829</id>
        <label>YHR122W</label>
    </interactant>
    <organismsDiffer>false</organismsDiffer>
    <experiments>7</experiments>
</comment>
<comment type="subcellular location">
    <subcellularLocation>
        <location evidence="1">Nucleus</location>
    </subcellularLocation>
</comment>
<comment type="miscellaneous">
    <text evidence="2">Present with 3150 molecules/cell in log phase SD medium.</text>
</comment>
<comment type="similarity">
    <text evidence="9">Belongs to the MET18/MMS19 family.</text>
</comment>
<protein>
    <recommendedName>
        <fullName>DNA repair/transcription protein MET18/MMS19</fullName>
    </recommendedName>
    <alternativeName>
        <fullName>Methyl methanesulfonate-sensitivity protein 19</fullName>
    </alternativeName>
</protein>
<proteinExistence type="evidence at protein level"/>
<sequence>MTPDELNSAVVTFMANLNIDDSKANETASTVTDSIVHRSIKLLEVVVALKDYFLSENEVERKKALTCLTTILAKTPKDHLSKNECSVIFQFYQSKLDDQALAKEVLEGFAALAPMKYVSINEIAQLLRLLLDNYQQGQHLASTRLWPFKILRKIFDRFFVNGSSTEQVKRINDLFIETFLHVANGEKDPRNLLLSFALNKSITSSLQNVENFKEDLFDVLFCYFPITFKPPKHDPYKISNQDLKTALRSAITATPLFAEDAYSNLLDKLTASSPVVKNDTLLTLLECVRKFGGSSILENWTLLWNALKFEIMQNSEGNENTLLNPYNKDQQSDDVGQYTNYDACLKIINLMALQLYNFDKVSFEKFFTHVLDELKPNFKYEKDLKQTCQILSAIGSGNVEIFNKVISSTFPLFLINTSEVAKLKLLIMNFSFFVDSYIDLFGRTSKESLGTPVPNNKMAEYKDEIIMILSMALTRSSKAEVTIRTLSVIQFTKMIKMKGFLTPEEVSLIIQYFTEEILTDNNKNIYYACLEGLKTISEIYEDLVFEISLKKLLDLLPDCFEEKIRVNDEENIHIETILKIILDFTTSRHILVKESITFLATKLNRVAKISKSREYCFLLISTIYSLFNNNNQNENVLNEEDALALKNAIEPKLFEIITQESAIVSDNYNLTLLSNVLFFTNLKIPQAAHQEELDRYNELFISEGKIRILDTPNVLAISYAKILSALNKNCQFPQKFTVLFGTVQLLKKHAPRMTETEKLGYLELLLVLSNKFVSEKDVIGLFDWKDLSVINLEVMVWLTKGLIMQNSLESSEIAKKFIDLLSNEEIGSLVSKLFEVFVMDISSLKKFKGISWNNNVKILYKQKFFGDIFQTLVSNYKNTVDMTIKCNYLTALSLVLKHTPSQSVGPFINDLFPLLLQALDMPDPEVRVSALETLKDTTDKHHTLITEHVSTIVPLLLSLSLPHKYNSVSVRLIALQLLEMITTVVPLNYCLSYQDDVLSALIPVLSDKKRIIRKQCVDTRQVYYELGQIPFE</sequence>
<feature type="chain" id="PRO_0000096445" description="DNA repair/transcription protein MET18/MMS19">
    <location>
        <begin position="1"/>
        <end position="1032"/>
    </location>
</feature>
<feature type="repeat" description="HEAT 1">
    <location>
        <begin position="862"/>
        <end position="901"/>
    </location>
</feature>
<feature type="repeat" description="HEAT 2">
    <location>
        <begin position="905"/>
        <end position="943"/>
    </location>
</feature>
<feature type="repeat" description="HEAT 3">
    <location>
        <begin position="946"/>
        <end position="988"/>
    </location>
</feature>
<feature type="repeat" description="HEAT 4">
    <location>
        <begin position="991"/>
        <end position="1029"/>
    </location>
</feature>
<feature type="sequence variant" description="In strain: SK1." evidence="3">
    <original>AL</original>
    <variation>SF</variation>
    <location>
        <begin position="111"/>
        <end position="112"/>
    </location>
</feature>
<feature type="sequence variant" description="In strain: SK1." evidence="3">
    <original>D</original>
    <variation>G</variation>
    <location>
        <position position="329"/>
    </location>
</feature>
<feature type="sequence variant" description="In strain: SK1." evidence="3">
    <original>V</original>
    <variation>M</variation>
    <location>
        <position position="335"/>
    </location>
</feature>
<feature type="sequence variant" description="In strain: SK1." evidence="3">
    <original>T</original>
    <variation>I</variation>
    <location>
        <position position="444"/>
    </location>
</feature>
<feature type="sequence variant" description="In strain: SK1." evidence="3">
    <original>N</original>
    <variation>S</variation>
    <location>
        <position position="697"/>
    </location>
</feature>
<feature type="sequence variant" description="In strain: SK1." evidence="3">
    <original>A</original>
    <variation>S</variation>
    <location>
        <position position="814"/>
    </location>
</feature>
<feature type="sequence variant" description="In strain: SK1.">
    <original>K</original>
    <variation>M</variation>
    <location>
        <position position="816"/>
    </location>
</feature>
<feature type="sequence variant" description="In strain: SK1.">
    <original>A</original>
    <variation>T</variation>
    <location>
        <position position="930"/>
    </location>
</feature>
<feature type="sequence variant" description="In strain: SK1.">
    <original>H</original>
    <variation>Q</variation>
    <location>
        <position position="963"/>
    </location>
</feature>
<feature type="sequence variant" description="In strain: SK1." evidence="3">
    <original>S</original>
    <variation>C</variation>
    <location>
        <position position="969"/>
    </location>
</feature>
<feature type="sequence conflict" description="In Ref. 1; AAB38865." evidence="9" ref="1">
    <original>P</original>
    <variation>Q</variation>
    <location>
        <position position="230"/>
    </location>
</feature>
<feature type="sequence conflict" description="In Ref. 1; AAB38865." evidence="9" ref="1">
    <original>D</original>
    <variation>G</variation>
    <location>
        <position position="329"/>
    </location>
</feature>
<feature type="sequence conflict" description="In Ref. 1; AAB38865." evidence="9" ref="1">
    <original>V</original>
    <variation>M</variation>
    <location>
        <position position="335"/>
    </location>
</feature>
<feature type="sequence conflict" description="In Ref. 1; AAB38865." evidence="9" ref="1">
    <original>V</original>
    <variation>I</variation>
    <location>
        <position position="361"/>
    </location>
</feature>
<feature type="helix" evidence="10">
    <location>
        <begin position="10"/>
        <end position="18"/>
    </location>
</feature>
<feature type="helix" evidence="10">
    <location>
        <begin position="19"/>
        <end position="21"/>
    </location>
</feature>
<feature type="helix" evidence="10">
    <location>
        <begin position="25"/>
        <end position="38"/>
    </location>
</feature>
<feature type="helix" evidence="10">
    <location>
        <begin position="41"/>
        <end position="50"/>
    </location>
</feature>
<feature type="turn" evidence="10">
    <location>
        <begin position="51"/>
        <end position="54"/>
    </location>
</feature>
<feature type="strand" evidence="10">
    <location>
        <begin position="55"/>
        <end position="57"/>
    </location>
</feature>
<feature type="helix" evidence="10">
    <location>
        <begin position="58"/>
        <end position="74"/>
    </location>
</feature>
<feature type="helix" evidence="10">
    <location>
        <begin position="81"/>
        <end position="97"/>
    </location>
</feature>
<feature type="helix" evidence="10">
    <location>
        <begin position="102"/>
        <end position="112"/>
    </location>
</feature>
<feature type="helix" evidence="10">
    <location>
        <begin position="120"/>
        <end position="132"/>
    </location>
</feature>
<feature type="strand" evidence="10">
    <location>
        <begin position="138"/>
        <end position="140"/>
    </location>
</feature>
<feature type="helix" evidence="10">
    <location>
        <begin position="141"/>
        <end position="157"/>
    </location>
</feature>
<feature type="turn" evidence="10">
    <location>
        <begin position="162"/>
        <end position="165"/>
    </location>
</feature>
<feature type="helix" evidence="10">
    <location>
        <begin position="169"/>
        <end position="181"/>
    </location>
</feature>
<feature type="helix" evidence="10">
    <location>
        <begin position="189"/>
        <end position="205"/>
    </location>
</feature>
<feature type="helix" evidence="10">
    <location>
        <begin position="209"/>
        <end position="212"/>
    </location>
</feature>
<feature type="helix" evidence="10">
    <location>
        <begin position="214"/>
        <end position="223"/>
    </location>
</feature>
<feature type="helix" evidence="10">
    <location>
        <begin position="245"/>
        <end position="251"/>
    </location>
</feature>
<feature type="helix" evidence="10">
    <location>
        <begin position="255"/>
        <end position="257"/>
    </location>
</feature>
<feature type="helix" evidence="10">
    <location>
        <begin position="258"/>
        <end position="268"/>
    </location>
</feature>
<feature type="helix" evidence="10">
    <location>
        <begin position="274"/>
        <end position="289"/>
    </location>
</feature>
<feature type="helix" evidence="10">
    <location>
        <begin position="294"/>
        <end position="313"/>
    </location>
</feature>
<feature type="helix" evidence="10">
    <location>
        <begin position="340"/>
        <end position="358"/>
    </location>
</feature>
<feature type="helix" evidence="10">
    <location>
        <begin position="360"/>
        <end position="379"/>
    </location>
</feature>
<feature type="helix" evidence="10">
    <location>
        <begin position="384"/>
        <end position="395"/>
    </location>
</feature>
<feature type="helix" evidence="10">
    <location>
        <begin position="399"/>
        <end position="413"/>
    </location>
</feature>
<feature type="helix" evidence="10">
    <location>
        <begin position="420"/>
        <end position="441"/>
    </location>
</feature>
<feature type="helix" evidence="10">
    <location>
        <begin position="457"/>
        <end position="460"/>
    </location>
</feature>
<feature type="helix" evidence="10">
    <location>
        <begin position="462"/>
        <end position="473"/>
    </location>
</feature>
<feature type="strand" evidence="10">
    <location>
        <begin position="474"/>
        <end position="476"/>
    </location>
</feature>
<feature type="helix" evidence="10">
    <location>
        <begin position="481"/>
        <end position="496"/>
    </location>
</feature>
<feature type="helix" evidence="10">
    <location>
        <begin position="503"/>
        <end position="519"/>
    </location>
</feature>
<feature type="helix" evidence="10">
    <location>
        <begin position="523"/>
        <end position="539"/>
    </location>
</feature>
<feature type="helix" evidence="10">
    <location>
        <begin position="541"/>
        <end position="555"/>
    </location>
</feature>
<feature type="strand" evidence="10">
    <location>
        <begin position="566"/>
        <end position="569"/>
    </location>
</feature>
<feature type="helix" evidence="10">
    <location>
        <begin position="574"/>
        <end position="583"/>
    </location>
</feature>
<feature type="helix" evidence="10">
    <location>
        <begin position="589"/>
        <end position="609"/>
    </location>
</feature>
<feature type="helix" evidence="10">
    <location>
        <begin position="614"/>
        <end position="631"/>
    </location>
</feature>
<feature type="helix" evidence="10">
    <location>
        <begin position="639"/>
        <end position="658"/>
    </location>
</feature>
<feature type="turn" evidence="10">
    <location>
        <begin position="661"/>
        <end position="665"/>
    </location>
</feature>
<feature type="helix" evidence="10">
    <location>
        <begin position="667"/>
        <end position="682"/>
    </location>
</feature>
<feature type="helix" evidence="10">
    <location>
        <begin position="686"/>
        <end position="688"/>
    </location>
</feature>
<feature type="helix" evidence="10">
    <location>
        <begin position="689"/>
        <end position="700"/>
    </location>
</feature>
<feature type="strand" evidence="10">
    <location>
        <begin position="703"/>
        <end position="705"/>
    </location>
</feature>
<feature type="turn" evidence="10">
    <location>
        <begin position="708"/>
        <end position="710"/>
    </location>
</feature>
<feature type="helix" evidence="10">
    <location>
        <begin position="716"/>
        <end position="723"/>
    </location>
</feature>
<feature type="helix" evidence="10">
    <location>
        <begin position="736"/>
        <end position="748"/>
    </location>
</feature>
<feature type="turn" evidence="10">
    <location>
        <begin position="749"/>
        <end position="752"/>
    </location>
</feature>
<feature type="helix" evidence="10">
    <location>
        <begin position="755"/>
        <end position="771"/>
    </location>
</feature>
<feature type="helix" evidence="10">
    <location>
        <begin position="775"/>
        <end position="781"/>
    </location>
</feature>
<feature type="helix" evidence="10">
    <location>
        <begin position="789"/>
        <end position="804"/>
    </location>
</feature>
<feature type="helix" evidence="10">
    <location>
        <begin position="810"/>
        <end position="821"/>
    </location>
</feature>
<feature type="helix" evidence="10">
    <location>
        <begin position="824"/>
        <end position="833"/>
    </location>
</feature>
<feature type="helix" evidence="10">
    <location>
        <begin position="834"/>
        <end position="837"/>
    </location>
</feature>
<feature type="strand" evidence="10">
    <location>
        <begin position="842"/>
        <end position="844"/>
    </location>
</feature>
<feature type="helix" evidence="10">
    <location>
        <begin position="860"/>
        <end position="876"/>
    </location>
</feature>
<feature type="helix" evidence="10">
    <location>
        <begin position="882"/>
        <end position="898"/>
    </location>
</feature>
<feature type="helix" evidence="10">
    <location>
        <begin position="901"/>
        <end position="903"/>
    </location>
</feature>
<feature type="helix" evidence="10">
    <location>
        <begin position="908"/>
        <end position="917"/>
    </location>
</feature>
<feature type="helix" evidence="10">
    <location>
        <begin position="924"/>
        <end position="940"/>
    </location>
</feature>
<feature type="helix" evidence="10">
    <location>
        <begin position="943"/>
        <end position="959"/>
    </location>
</feature>
<feature type="helix" evidence="10">
    <location>
        <begin position="968"/>
        <end position="984"/>
    </location>
</feature>
<feature type="helix" evidence="10">
    <location>
        <begin position="987"/>
        <end position="991"/>
    </location>
</feature>
<feature type="helix" evidence="10">
    <location>
        <begin position="995"/>
        <end position="1000"/>
    </location>
</feature>
<feature type="turn" evidence="10">
    <location>
        <begin position="1001"/>
        <end position="1006"/>
    </location>
</feature>
<feature type="helix" evidence="10">
    <location>
        <begin position="1011"/>
        <end position="1028"/>
    </location>
</feature>
<organism>
    <name type="scientific">Saccharomyces cerevisiae (strain ATCC 204508 / S288c)</name>
    <name type="common">Baker's yeast</name>
    <dbReference type="NCBI Taxonomy" id="559292"/>
    <lineage>
        <taxon>Eukaryota</taxon>
        <taxon>Fungi</taxon>
        <taxon>Dikarya</taxon>
        <taxon>Ascomycota</taxon>
        <taxon>Saccharomycotina</taxon>
        <taxon>Saccharomycetes</taxon>
        <taxon>Saccharomycetales</taxon>
        <taxon>Saccharomycetaceae</taxon>
        <taxon>Saccharomyces</taxon>
    </lineage>
</organism>
<gene>
    <name type="primary">MET18</name>
    <name type="synonym">MMS19</name>
    <name type="ordered locus">YIL128W</name>
</gene>
<dbReference type="EMBL" id="U70559">
    <property type="protein sequence ID" value="AAB38865.1"/>
    <property type="molecule type" value="Genomic_DNA"/>
</dbReference>
<dbReference type="EMBL" id="DQ115392">
    <property type="protein sequence ID" value="AAZ22499.1"/>
    <property type="molecule type" value="Genomic_DNA"/>
</dbReference>
<dbReference type="EMBL" id="Z38059">
    <property type="protein sequence ID" value="CAA86150.1"/>
    <property type="molecule type" value="Genomic_DNA"/>
</dbReference>
<dbReference type="EMBL" id="Z46833">
    <property type="protein sequence ID" value="CAA86864.1"/>
    <property type="molecule type" value="Genomic_DNA"/>
</dbReference>
<dbReference type="EMBL" id="BK006942">
    <property type="protein sequence ID" value="DAA08425.1"/>
    <property type="molecule type" value="Genomic_DNA"/>
</dbReference>
<dbReference type="PIR" id="S53571">
    <property type="entry name" value="S53571"/>
</dbReference>
<dbReference type="RefSeq" id="NP_012138.1">
    <property type="nucleotide sequence ID" value="NM_001179476.1"/>
</dbReference>
<dbReference type="PDB" id="8USP">
    <property type="method" value="EM"/>
    <property type="resolution" value="3.30 A"/>
    <property type="chains" value="A/B/C/D/E/F=1-1032"/>
</dbReference>
<dbReference type="PDB" id="8USQ">
    <property type="method" value="EM"/>
    <property type="resolution" value="12.77 A"/>
    <property type="chains" value="A/C/D/F=1-1032"/>
</dbReference>
<dbReference type="PDBsum" id="8USP"/>
<dbReference type="PDBsum" id="8USQ"/>
<dbReference type="EMDB" id="EMD-42510"/>
<dbReference type="EMDB" id="EMD-42511"/>
<dbReference type="SMR" id="P40469"/>
<dbReference type="BioGRID" id="34863">
    <property type="interactions" value="310"/>
</dbReference>
<dbReference type="ComplexPortal" id="CPX-2321">
    <property type="entry name" value="CIA targeting complex"/>
</dbReference>
<dbReference type="DIP" id="DIP-1438N"/>
<dbReference type="FunCoup" id="P40469">
    <property type="interactions" value="1134"/>
</dbReference>
<dbReference type="IntAct" id="P40469">
    <property type="interactions" value="46"/>
</dbReference>
<dbReference type="MINT" id="P40469"/>
<dbReference type="STRING" id="4932.YIL128W"/>
<dbReference type="CarbonylDB" id="P40469"/>
<dbReference type="iPTMnet" id="P40469"/>
<dbReference type="PaxDb" id="4932-YIL128W"/>
<dbReference type="PeptideAtlas" id="P40469"/>
<dbReference type="EnsemblFungi" id="YIL128W_mRNA">
    <property type="protein sequence ID" value="YIL128W"/>
    <property type="gene ID" value="YIL128W"/>
</dbReference>
<dbReference type="GeneID" id="854678"/>
<dbReference type="KEGG" id="sce:YIL128W"/>
<dbReference type="AGR" id="SGD:S000001390"/>
<dbReference type="SGD" id="S000001390">
    <property type="gene designation" value="MET18"/>
</dbReference>
<dbReference type="VEuPathDB" id="FungiDB:YIL128W"/>
<dbReference type="eggNOG" id="KOG1967">
    <property type="taxonomic scope" value="Eukaryota"/>
</dbReference>
<dbReference type="GeneTree" id="ENSGT00390000015583"/>
<dbReference type="HOGENOM" id="CLU_005943_1_0_1"/>
<dbReference type="InParanoid" id="P40469"/>
<dbReference type="OMA" id="IILDFTT"/>
<dbReference type="OrthoDB" id="342900at2759"/>
<dbReference type="BioCyc" id="YEAST:G3O-31379-MONOMER"/>
<dbReference type="BioGRID-ORCS" id="854678">
    <property type="hits" value="3 hits in 10 CRISPR screens"/>
</dbReference>
<dbReference type="PRO" id="PR:P40469"/>
<dbReference type="Proteomes" id="UP000002311">
    <property type="component" value="Chromosome IX"/>
</dbReference>
<dbReference type="RNAct" id="P40469">
    <property type="molecule type" value="protein"/>
</dbReference>
<dbReference type="GO" id="GO:0005737">
    <property type="term" value="C:cytoplasm"/>
    <property type="evidence" value="ECO:0007005"/>
    <property type="project" value="SGD"/>
</dbReference>
<dbReference type="GO" id="GO:0005829">
    <property type="term" value="C:cytosol"/>
    <property type="evidence" value="ECO:0000304"/>
    <property type="project" value="Reactome"/>
</dbReference>
<dbReference type="GO" id="GO:0097361">
    <property type="term" value="C:cytosolic [4Fe-4S] assembly targeting complex"/>
    <property type="evidence" value="ECO:0000314"/>
    <property type="project" value="SGD"/>
</dbReference>
<dbReference type="GO" id="GO:0005634">
    <property type="term" value="C:nucleus"/>
    <property type="evidence" value="ECO:0007669"/>
    <property type="project" value="UniProtKB-SubCell"/>
</dbReference>
<dbReference type="GO" id="GO:0006281">
    <property type="term" value="P:DNA repair"/>
    <property type="evidence" value="ECO:0007669"/>
    <property type="project" value="UniProtKB-KW"/>
</dbReference>
<dbReference type="GO" id="GO:0016226">
    <property type="term" value="P:iron-sulfur cluster assembly"/>
    <property type="evidence" value="ECO:0000315"/>
    <property type="project" value="UniProtKB"/>
</dbReference>
<dbReference type="GO" id="GO:0051604">
    <property type="term" value="P:protein maturation"/>
    <property type="evidence" value="ECO:0007669"/>
    <property type="project" value="InterPro"/>
</dbReference>
<dbReference type="Gene3D" id="1.25.10.10">
    <property type="entry name" value="Leucine-rich Repeat Variant"/>
    <property type="match status" value="1"/>
</dbReference>
<dbReference type="InterPro" id="IPR011989">
    <property type="entry name" value="ARM-like"/>
</dbReference>
<dbReference type="InterPro" id="IPR016024">
    <property type="entry name" value="ARM-type_fold"/>
</dbReference>
<dbReference type="InterPro" id="IPR039920">
    <property type="entry name" value="MMS19"/>
</dbReference>
<dbReference type="InterPro" id="IPR024687">
    <property type="entry name" value="MMS19_C"/>
</dbReference>
<dbReference type="InterPro" id="IPR029240">
    <property type="entry name" value="MMS19_N"/>
</dbReference>
<dbReference type="PANTHER" id="PTHR12891">
    <property type="entry name" value="DNA REPAIR/TRANSCRIPTION PROTEIN MET18/MMS19"/>
    <property type="match status" value="1"/>
</dbReference>
<dbReference type="PANTHER" id="PTHR12891:SF0">
    <property type="entry name" value="MMS19 NUCLEOTIDE EXCISION REPAIR PROTEIN HOMOLOG"/>
    <property type="match status" value="1"/>
</dbReference>
<dbReference type="Pfam" id="PF12460">
    <property type="entry name" value="MMS19_C"/>
    <property type="match status" value="1"/>
</dbReference>
<dbReference type="Pfam" id="PF14500">
    <property type="entry name" value="MMS19_N"/>
    <property type="match status" value="1"/>
</dbReference>
<dbReference type="SUPFAM" id="SSF48371">
    <property type="entry name" value="ARM repeat"/>
    <property type="match status" value="1"/>
</dbReference>
<accession>P40469</accession>
<accession>D6VVF9</accession>
<accession>P89106</accession>
<accession>Q45U11</accession>
<evidence type="ECO:0000250" key="1"/>
<evidence type="ECO:0000269" key="2">
    <source>
    </source>
</evidence>
<evidence type="ECO:0000269" key="3">
    <source>
    </source>
</evidence>
<evidence type="ECO:0000269" key="4">
    <source>
    </source>
</evidence>
<evidence type="ECO:0000269" key="5">
    <source>
    </source>
</evidence>
<evidence type="ECO:0000269" key="6">
    <source>
    </source>
</evidence>
<evidence type="ECO:0000269" key="7">
    <source>
    </source>
</evidence>
<evidence type="ECO:0000269" key="8">
    <source>
    </source>
</evidence>
<evidence type="ECO:0000305" key="9"/>
<evidence type="ECO:0007829" key="10">
    <source>
        <dbReference type="PDB" id="8USP"/>
    </source>
</evidence>
<reference key="1">
    <citation type="journal article" date="1996" name="Mol. Cell. Biol.">
        <title>Dual requirement for the yeast MMS19 gene in DNA repair and RNA polymerase II transcription.</title>
        <authorList>
            <person name="Lauder S."/>
            <person name="Bankmann M."/>
            <person name="Guzder S.N."/>
            <person name="Sung P."/>
            <person name="Prakash L."/>
            <person name="Prakash S."/>
        </authorList>
    </citation>
    <scope>NUCLEOTIDE SEQUENCE [GENOMIC DNA]</scope>
    <scope>FUNCTION</scope>
</reference>
<reference key="2">
    <citation type="journal article" date="2005" name="Nat. Genet.">
        <title>Quantitative trait loci mapped to single-nucleotide resolution in yeast.</title>
        <authorList>
            <person name="Deutschbauer A.M."/>
            <person name="Davis R.W."/>
        </authorList>
    </citation>
    <scope>NUCLEOTIDE SEQUENCE [GENOMIC DNA]</scope>
    <scope>VARIANTS 111-ALA-LEU-112 DELINS SER-PHE; GLY-329; MET-335; ILE-444; SER-697; SER-814; THR-930; GLN-963 AND CYS-969</scope>
    <source>
        <strain>SK1</strain>
    </source>
</reference>
<reference key="3">
    <citation type="journal article" date="1997" name="Nature">
        <title>The nucleotide sequence of Saccharomyces cerevisiae chromosome IX.</title>
        <authorList>
            <person name="Churcher C.M."/>
            <person name="Bowman S."/>
            <person name="Badcock K."/>
            <person name="Bankier A.T."/>
            <person name="Brown D."/>
            <person name="Chillingworth T."/>
            <person name="Connor R."/>
            <person name="Devlin K."/>
            <person name="Gentles S."/>
            <person name="Hamlin N."/>
            <person name="Harris D.E."/>
            <person name="Horsnell T."/>
            <person name="Hunt S."/>
            <person name="Jagels K."/>
            <person name="Jones M."/>
            <person name="Lye G."/>
            <person name="Moule S."/>
            <person name="Odell C."/>
            <person name="Pearson D."/>
            <person name="Rajandream M.A."/>
            <person name="Rice P."/>
            <person name="Rowley N."/>
            <person name="Skelton J."/>
            <person name="Smith V."/>
            <person name="Walsh S.V."/>
            <person name="Whitehead S."/>
            <person name="Barrell B.G."/>
        </authorList>
    </citation>
    <scope>NUCLEOTIDE SEQUENCE [LARGE SCALE GENOMIC DNA]</scope>
    <source>
        <strain>ATCC 204508 / S288c</strain>
    </source>
</reference>
<reference key="4">
    <citation type="journal article" date="2014" name="G3 (Bethesda)">
        <title>The reference genome sequence of Saccharomyces cerevisiae: Then and now.</title>
        <authorList>
            <person name="Engel S.R."/>
            <person name="Dietrich F.S."/>
            <person name="Fisk D.G."/>
            <person name="Binkley G."/>
            <person name="Balakrishnan R."/>
            <person name="Costanzo M.C."/>
            <person name="Dwight S.S."/>
            <person name="Hitz B.C."/>
            <person name="Karra K."/>
            <person name="Nash R.S."/>
            <person name="Weng S."/>
            <person name="Wong E.D."/>
            <person name="Lloyd P."/>
            <person name="Skrzypek M.S."/>
            <person name="Miyasato S.R."/>
            <person name="Simison M."/>
            <person name="Cherry J.M."/>
        </authorList>
    </citation>
    <scope>GENOME REANNOTATION</scope>
    <source>
        <strain>ATCC 204508 / S288c</strain>
    </source>
</reference>
<reference key="5">
    <citation type="journal article" date="1979" name="Mol. Gen. Genet.">
        <title>Three additional genes involved in pyrimidine dimer removal in Saccharomyces cerevisiae: RAD7, RAD14 and MMS19.</title>
        <authorList>
            <person name="Prakash L."/>
            <person name="Prakash S."/>
        </authorList>
    </citation>
    <scope>FUNCTION</scope>
</reference>
<reference key="6">
    <citation type="journal article" date="1997" name="Nucleic Acids Res.">
        <title>Saccharomyces cerevisiae mms19 mutants are deficient in transcription-coupled and global nucleotide excision repair.</title>
        <authorList>
            <person name="Lombaerts M."/>
            <person name="Tijsterman M."/>
            <person name="Verhage R.A."/>
            <person name="Brouwer J."/>
        </authorList>
    </citation>
    <scope>FUNCTION</scope>
</reference>
<reference key="7">
    <citation type="journal article" date="2003" name="Nature">
        <title>Global analysis of protein expression in yeast.</title>
        <authorList>
            <person name="Ghaemmaghami S."/>
            <person name="Huh W.-K."/>
            <person name="Bower K."/>
            <person name="Howson R.W."/>
            <person name="Belle A."/>
            <person name="Dephoure N."/>
            <person name="O'Shea E.K."/>
            <person name="Weissman J.S."/>
        </authorList>
    </citation>
    <scope>LEVEL OF PROTEIN EXPRESSION [LARGE SCALE ANALYSIS]</scope>
</reference>
<reference key="8">
    <citation type="journal article" date="2008" name="Proc. Natl. Acad. Sci. U.S.A.">
        <title>Mms19 protein functions in nucleotide excision repair by sustaining an adequate cellular concentration of the TFIIH component Rad3.</title>
        <authorList>
            <person name="Kou H."/>
            <person name="Zhou Y."/>
            <person name="Gorospe R.M."/>
            <person name="Wang Z."/>
        </authorList>
    </citation>
    <scope>FUNCTION</scope>
</reference>
<reference key="9">
    <citation type="journal article" date="2012" name="Science">
        <title>MMS19 assembles iron-sulfur proteins required for DNA metabolism and genomic integrity.</title>
        <authorList>
            <person name="Stehling O."/>
            <person name="Vashisht A.A."/>
            <person name="Mascarenhas J."/>
            <person name="Jonsson Z.O."/>
            <person name="Sharma T."/>
            <person name="Netz D.J."/>
            <person name="Pierik A.J."/>
            <person name="Wohlschlegel J.A."/>
            <person name="Lill R."/>
        </authorList>
    </citation>
    <scope>FUNCTION</scope>
    <scope>IDENTIFICATION IN THE CIA COMPLEX</scope>
</reference>
<name>MET18_YEAST</name>